<protein>
    <recommendedName>
        <fullName>Glucose starvation modulator protein 1</fullName>
    </recommendedName>
    <alternativeName>
        <fullName>Zinc finger domain-containing protein 23</fullName>
    </alternativeName>
</protein>
<accession>Q59WB9</accession>
<accession>A0A1D8PE07</accession>
<gene>
    <name type="primary">ZCF23</name>
    <name type="synonym">GSM1</name>
    <name type="ordered locus">CAALFM_C107170CA</name>
    <name type="ORF">CaO19.11930</name>
    <name type="ORF">CaO19.4450</name>
</gene>
<name>GSM1_CANAL</name>
<feature type="chain" id="PRO_0000406479" description="Glucose starvation modulator protein 1">
    <location>
        <begin position="1"/>
        <end position="566"/>
    </location>
</feature>
<feature type="DNA-binding region" description="Zn(2)-C6 fungal-type" evidence="2">
    <location>
        <begin position="20"/>
        <end position="48"/>
    </location>
</feature>
<feature type="region of interest" description="Disordered" evidence="3">
    <location>
        <begin position="65"/>
        <end position="93"/>
    </location>
</feature>
<feature type="region of interest" description="Disordered" evidence="3">
    <location>
        <begin position="250"/>
        <end position="270"/>
    </location>
</feature>
<feature type="compositionally biased region" description="Polar residues" evidence="3">
    <location>
        <begin position="83"/>
        <end position="93"/>
    </location>
</feature>
<feature type="compositionally biased region" description="Low complexity" evidence="3">
    <location>
        <begin position="253"/>
        <end position="270"/>
    </location>
</feature>
<sequence length="566" mass="63609">MTKKLTPQEKKNRKPAVRACVFCHQKHLQCSNERPCKNCVKRNIAHGCQDIVRKRVKYLTGESVPGAVSNKQSTPRKKLKTGPVSTSVSPMDSVKSELTTPVESSNHFPPPMSSSVDALPTTQHSAIEIPPNDQPISDILEVPPLFDSSHMISSEAPETNITLTTQNLITPDPLSFHTNTVSNTTTDVLNKLLNDNYETESMLSANNSNGDHLLGMAHTSSGHLSNGQQFQSNYLNEEYMMLGDIILQSKQASPSPSNTSTSENNTNTLSPSSFGYISNINFEDFNQPKRKVVQKLKDSRPFISLGFTADLAPHDNNNNTDYYDDKMTNNITGKTEEGPGNPIINYNTKFTTDYVPPSITNNLYKTASDLYSKELKNFYYPLSYHALTKLLKVIFGGNDLSPEEKQEKRSKLLIILKLIASYRPTFIAAHRDLIQEDLLMLEMTLQRSLLDYKKLAELNSSPTIMWRRTGEIISITEDMALLLEHSSFDLLKERRFIFELMDDNSIVDYFNLFANIAVGNLKSVIQTAIQMKTKSSNLIKFTCVFTIKRDIFDIPMIVIGQFLPIV</sequence>
<proteinExistence type="inferred from homology"/>
<comment type="function">
    <text evidence="1">Transcription factor which regulates nonfermentable carbon utilization.</text>
</comment>
<comment type="subcellular location">
    <subcellularLocation>
        <location evidence="2">Nucleus</location>
    </subcellularLocation>
</comment>
<comment type="similarity">
    <text evidence="4">Belongs to the ERT1/acuK family.</text>
</comment>
<organism>
    <name type="scientific">Candida albicans (strain SC5314 / ATCC MYA-2876)</name>
    <name type="common">Yeast</name>
    <dbReference type="NCBI Taxonomy" id="237561"/>
    <lineage>
        <taxon>Eukaryota</taxon>
        <taxon>Fungi</taxon>
        <taxon>Dikarya</taxon>
        <taxon>Ascomycota</taxon>
        <taxon>Saccharomycotina</taxon>
        <taxon>Pichiomycetes</taxon>
        <taxon>Debaryomycetaceae</taxon>
        <taxon>Candida/Lodderomyces clade</taxon>
        <taxon>Candida</taxon>
    </lineage>
</organism>
<reference key="1">
    <citation type="journal article" date="2004" name="Proc. Natl. Acad. Sci. U.S.A.">
        <title>The diploid genome sequence of Candida albicans.</title>
        <authorList>
            <person name="Jones T."/>
            <person name="Federspiel N.A."/>
            <person name="Chibana H."/>
            <person name="Dungan J."/>
            <person name="Kalman S."/>
            <person name="Magee B.B."/>
            <person name="Newport G."/>
            <person name="Thorstenson Y.R."/>
            <person name="Agabian N."/>
            <person name="Magee P.T."/>
            <person name="Davis R.W."/>
            <person name="Scherer S."/>
        </authorList>
    </citation>
    <scope>NUCLEOTIDE SEQUENCE [LARGE SCALE GENOMIC DNA]</scope>
    <source>
        <strain>SC5314 / ATCC MYA-2876</strain>
    </source>
</reference>
<reference key="2">
    <citation type="journal article" date="2007" name="Genome Biol.">
        <title>Assembly of the Candida albicans genome into sixteen supercontigs aligned on the eight chromosomes.</title>
        <authorList>
            <person name="van het Hoog M."/>
            <person name="Rast T.J."/>
            <person name="Martchenko M."/>
            <person name="Grindle S."/>
            <person name="Dignard D."/>
            <person name="Hogues H."/>
            <person name="Cuomo C."/>
            <person name="Berriman M."/>
            <person name="Scherer S."/>
            <person name="Magee B.B."/>
            <person name="Whiteway M."/>
            <person name="Chibana H."/>
            <person name="Nantel A."/>
            <person name="Magee P.T."/>
        </authorList>
    </citation>
    <scope>GENOME REANNOTATION</scope>
    <source>
        <strain>SC5314 / ATCC MYA-2876</strain>
    </source>
</reference>
<reference key="3">
    <citation type="journal article" date="2013" name="Genome Biol.">
        <title>Assembly of a phased diploid Candida albicans genome facilitates allele-specific measurements and provides a simple model for repeat and indel structure.</title>
        <authorList>
            <person name="Muzzey D."/>
            <person name="Schwartz K."/>
            <person name="Weissman J.S."/>
            <person name="Sherlock G."/>
        </authorList>
    </citation>
    <scope>NUCLEOTIDE SEQUENCE [LARGE SCALE GENOMIC DNA]</scope>
    <scope>GENOME REANNOTATION</scope>
    <source>
        <strain>SC5314 / ATCC MYA-2876</strain>
    </source>
</reference>
<evidence type="ECO:0000250" key="1"/>
<evidence type="ECO:0000255" key="2">
    <source>
        <dbReference type="PROSITE-ProRule" id="PRU00227"/>
    </source>
</evidence>
<evidence type="ECO:0000256" key="3">
    <source>
        <dbReference type="SAM" id="MobiDB-lite"/>
    </source>
</evidence>
<evidence type="ECO:0000305" key="4"/>
<dbReference type="EMBL" id="CP017623">
    <property type="protein sequence ID" value="AOW26369.1"/>
    <property type="molecule type" value="Genomic_DNA"/>
</dbReference>
<dbReference type="RefSeq" id="XP_713894.1">
    <property type="nucleotide sequence ID" value="XM_708801.1"/>
</dbReference>
<dbReference type="FunCoup" id="Q59WB9">
    <property type="interactions" value="169"/>
</dbReference>
<dbReference type="EnsemblFungi" id="C1_07170C_A-T">
    <property type="protein sequence ID" value="C1_07170C_A-T-p1"/>
    <property type="gene ID" value="C1_07170C_A"/>
</dbReference>
<dbReference type="GeneID" id="3644477"/>
<dbReference type="KEGG" id="cal:CAALFM_C107170CA"/>
<dbReference type="CGD" id="CAL0000175205">
    <property type="gene designation" value="ZCF23"/>
</dbReference>
<dbReference type="VEuPathDB" id="FungiDB:C1_07170C_A"/>
<dbReference type="eggNOG" id="ENOG502R2ZP">
    <property type="taxonomic scope" value="Eukaryota"/>
</dbReference>
<dbReference type="HOGENOM" id="CLU_010748_2_2_1"/>
<dbReference type="InParanoid" id="Q59WB9"/>
<dbReference type="OrthoDB" id="2538135at2759"/>
<dbReference type="PRO" id="PR:Q59WB9"/>
<dbReference type="Proteomes" id="UP000000559">
    <property type="component" value="Chromosome 1"/>
</dbReference>
<dbReference type="GO" id="GO:0005634">
    <property type="term" value="C:nucleus"/>
    <property type="evidence" value="ECO:0000318"/>
    <property type="project" value="GO_Central"/>
</dbReference>
<dbReference type="GO" id="GO:0003700">
    <property type="term" value="F:DNA-binding transcription factor activity"/>
    <property type="evidence" value="ECO:0000318"/>
    <property type="project" value="GO_Central"/>
</dbReference>
<dbReference type="GO" id="GO:0000981">
    <property type="term" value="F:DNA-binding transcription factor activity, RNA polymerase II-specific"/>
    <property type="evidence" value="ECO:0007669"/>
    <property type="project" value="InterPro"/>
</dbReference>
<dbReference type="GO" id="GO:0000977">
    <property type="term" value="F:RNA polymerase II transcription regulatory region sequence-specific DNA binding"/>
    <property type="evidence" value="ECO:0000318"/>
    <property type="project" value="GO_Central"/>
</dbReference>
<dbReference type="GO" id="GO:0008270">
    <property type="term" value="F:zinc ion binding"/>
    <property type="evidence" value="ECO:0007669"/>
    <property type="project" value="InterPro"/>
</dbReference>
<dbReference type="GO" id="GO:0009267">
    <property type="term" value="P:cellular response to starvation"/>
    <property type="evidence" value="ECO:0000318"/>
    <property type="project" value="GO_Central"/>
</dbReference>
<dbReference type="CDD" id="cd00067">
    <property type="entry name" value="GAL4"/>
    <property type="match status" value="1"/>
</dbReference>
<dbReference type="InterPro" id="IPR050335">
    <property type="entry name" value="ERT1_acuK_gluconeogen_tf"/>
</dbReference>
<dbReference type="InterPro" id="IPR056751">
    <property type="entry name" value="PAS_13"/>
</dbReference>
<dbReference type="InterPro" id="IPR036864">
    <property type="entry name" value="Zn2-C6_fun-type_DNA-bd_sf"/>
</dbReference>
<dbReference type="InterPro" id="IPR001138">
    <property type="entry name" value="Zn2Cys6_DnaBD"/>
</dbReference>
<dbReference type="PANTHER" id="PTHR47659:SF8">
    <property type="entry name" value="GLUCOSE STARVATION MODULATOR PROTEIN 1"/>
    <property type="match status" value="1"/>
</dbReference>
<dbReference type="PANTHER" id="PTHR47659">
    <property type="entry name" value="ZN(II)2CYS6 TRANSCRIPTION FACTOR (EUROFUNG)-RELATED"/>
    <property type="match status" value="1"/>
</dbReference>
<dbReference type="Pfam" id="PF24990">
    <property type="entry name" value="PAS_13"/>
    <property type="match status" value="1"/>
</dbReference>
<dbReference type="Pfam" id="PF00172">
    <property type="entry name" value="Zn_clus"/>
    <property type="match status" value="1"/>
</dbReference>
<dbReference type="SMART" id="SM00066">
    <property type="entry name" value="GAL4"/>
    <property type="match status" value="1"/>
</dbReference>
<dbReference type="SUPFAM" id="SSF57701">
    <property type="entry name" value="Zn2/Cys6 DNA-binding domain"/>
    <property type="match status" value="1"/>
</dbReference>
<dbReference type="PROSITE" id="PS00463">
    <property type="entry name" value="ZN2_CY6_FUNGAL_1"/>
    <property type="match status" value="1"/>
</dbReference>
<dbReference type="PROSITE" id="PS50048">
    <property type="entry name" value="ZN2_CY6_FUNGAL_2"/>
    <property type="match status" value="1"/>
</dbReference>
<keyword id="KW-0238">DNA-binding</keyword>
<keyword id="KW-0479">Metal-binding</keyword>
<keyword id="KW-0539">Nucleus</keyword>
<keyword id="KW-1185">Reference proteome</keyword>
<keyword id="KW-0804">Transcription</keyword>
<keyword id="KW-0805">Transcription regulation</keyword>
<keyword id="KW-0862">Zinc</keyword>